<feature type="chain" id="PRO_0000453368" description="Uncharacterized protein CXorf58 homolog">
    <location>
        <begin position="1"/>
        <end position="368"/>
    </location>
</feature>
<feature type="region of interest" description="Disordered" evidence="1">
    <location>
        <begin position="1"/>
        <end position="22"/>
    </location>
</feature>
<feature type="region of interest" description="Disordered" evidence="1">
    <location>
        <begin position="282"/>
        <end position="317"/>
    </location>
</feature>
<feature type="compositionally biased region" description="Basic and acidic residues" evidence="1">
    <location>
        <begin position="293"/>
        <end position="311"/>
    </location>
</feature>
<proteinExistence type="predicted"/>
<organism>
    <name type="scientific">Mus musculus</name>
    <name type="common">Mouse</name>
    <dbReference type="NCBI Taxonomy" id="10090"/>
    <lineage>
        <taxon>Eukaryota</taxon>
        <taxon>Metazoa</taxon>
        <taxon>Chordata</taxon>
        <taxon>Craniata</taxon>
        <taxon>Vertebrata</taxon>
        <taxon>Euteleostomi</taxon>
        <taxon>Mammalia</taxon>
        <taxon>Eutheria</taxon>
        <taxon>Euarchontoglires</taxon>
        <taxon>Glires</taxon>
        <taxon>Rodentia</taxon>
        <taxon>Myomorpha</taxon>
        <taxon>Muroidea</taxon>
        <taxon>Muridae</taxon>
        <taxon>Murinae</taxon>
        <taxon>Mus</taxon>
        <taxon>Mus</taxon>
    </lineage>
</organism>
<evidence type="ECO:0000256" key="1">
    <source>
        <dbReference type="SAM" id="MobiDB-lite"/>
    </source>
</evidence>
<evidence type="ECO:0000305" key="2"/>
<accession>A0A5F8MPE6</accession>
<name>CX058_MOUSE</name>
<dbReference type="EMBL" id="AL627302">
    <property type="status" value="NOT_ANNOTATED_CDS"/>
    <property type="molecule type" value="Genomic_DNA"/>
</dbReference>
<dbReference type="EMBL" id="AL646049">
    <property type="status" value="NOT_ANNOTATED_CDS"/>
    <property type="molecule type" value="Genomic_DNA"/>
</dbReference>
<dbReference type="CCDS" id="CCDS90736.1"/>
<dbReference type="RefSeq" id="NP_001349810.1">
    <property type="nucleotide sequence ID" value="NM_001362881.1"/>
</dbReference>
<dbReference type="RefSeq" id="XP_011246005.1">
    <property type="nucleotide sequence ID" value="XM_011247703.1"/>
</dbReference>
<dbReference type="SMR" id="A0A5F8MPE6"/>
<dbReference type="FunCoup" id="A0A5F8MPE6">
    <property type="interactions" value="2"/>
</dbReference>
<dbReference type="STRING" id="10090.ENSMUSP00000158935"/>
<dbReference type="PhosphoSitePlus" id="A0A5F8MPE6"/>
<dbReference type="Antibodypedia" id="24554">
    <property type="antibodies" value="43 antibodies from 11 providers"/>
</dbReference>
<dbReference type="Ensembl" id="ENSMUST00000239046.2">
    <property type="protein sequence ID" value="ENSMUSP00000158935.2"/>
    <property type="gene ID" value="ENSMUSG00000118554.2"/>
</dbReference>
<dbReference type="GeneID" id="631145"/>
<dbReference type="AGR" id="MGI:1921682"/>
<dbReference type="VEuPathDB" id="HostDB:ENSMUSG00000118554"/>
<dbReference type="GeneTree" id="ENSGT00510000048637"/>
<dbReference type="InParanoid" id="A0A5F8MPE6"/>
<dbReference type="OMA" id="NYWRRLN"/>
<dbReference type="OrthoDB" id="10006090at2759"/>
<dbReference type="PRO" id="PR:A0A5F8MPE6"/>
<dbReference type="Proteomes" id="UP000000589">
    <property type="component" value="Chromosome X"/>
</dbReference>
<dbReference type="Bgee" id="ENSMUSG00000118554">
    <property type="expression patterns" value="Expressed in spermatid and 2 other cell types or tissues"/>
</dbReference>
<dbReference type="PANTHER" id="PTHR33504:SF1">
    <property type="entry name" value="FAMILY WITH SEQUENCE SIMILARITY 90, MEMBER A1B"/>
    <property type="match status" value="1"/>
</dbReference>
<dbReference type="PANTHER" id="PTHR33504">
    <property type="entry name" value="NADH DEHYDROGENASE (UBIQUINONE) 1 BETA SUBCOMPLEX, 4"/>
    <property type="match status" value="1"/>
</dbReference>
<reference key="1">
    <citation type="journal article" date="2009" name="PLoS Biol.">
        <title>Lineage-specific biology revealed by a finished genome assembly of the mouse.</title>
        <authorList>
            <person name="Church D.M."/>
            <person name="Goodstadt L."/>
            <person name="Hillier L.W."/>
            <person name="Zody M.C."/>
            <person name="Goldstein S."/>
            <person name="She X."/>
            <person name="Bult C.J."/>
            <person name="Agarwala R."/>
            <person name="Cherry J.L."/>
            <person name="DiCuccio M."/>
            <person name="Hlavina W."/>
            <person name="Kapustin Y."/>
            <person name="Meric P."/>
            <person name="Maglott D."/>
            <person name="Birtle Z."/>
            <person name="Marques A.C."/>
            <person name="Graves T."/>
            <person name="Zhou S."/>
            <person name="Teague B."/>
            <person name="Potamousis K."/>
            <person name="Churas C."/>
            <person name="Place M."/>
            <person name="Herschleb J."/>
            <person name="Runnheim R."/>
            <person name="Forrest D."/>
            <person name="Amos-Landgraf J."/>
            <person name="Schwartz D.C."/>
            <person name="Cheng Z."/>
            <person name="Lindblad-Toh K."/>
            <person name="Eichler E.E."/>
            <person name="Ponting C.P."/>
        </authorList>
    </citation>
    <scope>NUCLEOTIDE SEQUENCE [LARGE SCALE GENOMIC DNA]</scope>
    <source>
        <strain>C57BL/6J</strain>
    </source>
</reference>
<keyword id="KW-1185">Reference proteome</keyword>
<protein>
    <recommendedName>
        <fullName evidence="2">Uncharacterized protein CXorf58 homolog</fullName>
    </recommendedName>
</protein>
<sequence>MEKSSNTTGSGGPKSDSQLPEKLRRTFSARAAKIKARKANRETSAAKIQRAWYIYVDKSLFKLLKHTVCAAEYCVAHELLKKVSPTEAALLKDPSMKCKVRFRFSGETFPPCIVFKIFLKSDSRGFTYFSGKNLLKPSSKAVADAYKIMGERKFYQQIMQDEYIFQKFKIADHMDVVTVQDYMQFCSLTDETPASSGGKNNYWRRLNLSNIPRTMMMYDIVDYAESGVISDRLQKEKKYLLQKPRTEEMRLHQLDIVSKVRYPTITTIRPFYQPWEQKREMKHLGRRSKKAQKRVEKMKKAYKESKEEKASSQEPPASRTQIKKKVIFYTPSFEILKVEELIDTDLESEERELFAWYQDLYVKHSSLF</sequence>